<organism>
    <name type="scientific">Arabidopsis thaliana</name>
    <name type="common">Mouse-ear cress</name>
    <dbReference type="NCBI Taxonomy" id="3702"/>
    <lineage>
        <taxon>Eukaryota</taxon>
        <taxon>Viridiplantae</taxon>
        <taxon>Streptophyta</taxon>
        <taxon>Embryophyta</taxon>
        <taxon>Tracheophyta</taxon>
        <taxon>Spermatophyta</taxon>
        <taxon>Magnoliopsida</taxon>
        <taxon>eudicotyledons</taxon>
        <taxon>Gunneridae</taxon>
        <taxon>Pentapetalae</taxon>
        <taxon>rosids</taxon>
        <taxon>malvids</taxon>
        <taxon>Brassicales</taxon>
        <taxon>Brassicaceae</taxon>
        <taxon>Camelineae</taxon>
        <taxon>Arabidopsis</taxon>
    </lineage>
</organism>
<protein>
    <recommendedName>
        <fullName>GDSL esterase/lipase At1g09390</fullName>
        <ecNumber>3.1.1.-</ecNumber>
    </recommendedName>
    <alternativeName>
        <fullName>Extracellular lipase At1g09390</fullName>
    </alternativeName>
</protein>
<reference key="1">
    <citation type="journal article" date="2000" name="Nature">
        <title>Sequence and analysis of chromosome 1 of the plant Arabidopsis thaliana.</title>
        <authorList>
            <person name="Theologis A."/>
            <person name="Ecker J.R."/>
            <person name="Palm C.J."/>
            <person name="Federspiel N.A."/>
            <person name="Kaul S."/>
            <person name="White O."/>
            <person name="Alonso J."/>
            <person name="Altafi H."/>
            <person name="Araujo R."/>
            <person name="Bowman C.L."/>
            <person name="Brooks S.Y."/>
            <person name="Buehler E."/>
            <person name="Chan A."/>
            <person name="Chao Q."/>
            <person name="Chen H."/>
            <person name="Cheuk R.F."/>
            <person name="Chin C.W."/>
            <person name="Chung M.K."/>
            <person name="Conn L."/>
            <person name="Conway A.B."/>
            <person name="Conway A.R."/>
            <person name="Creasy T.H."/>
            <person name="Dewar K."/>
            <person name="Dunn P."/>
            <person name="Etgu P."/>
            <person name="Feldblyum T.V."/>
            <person name="Feng J.-D."/>
            <person name="Fong B."/>
            <person name="Fujii C.Y."/>
            <person name="Gill J.E."/>
            <person name="Goldsmith A.D."/>
            <person name="Haas B."/>
            <person name="Hansen N.F."/>
            <person name="Hughes B."/>
            <person name="Huizar L."/>
            <person name="Hunter J.L."/>
            <person name="Jenkins J."/>
            <person name="Johnson-Hopson C."/>
            <person name="Khan S."/>
            <person name="Khaykin E."/>
            <person name="Kim C.J."/>
            <person name="Koo H.L."/>
            <person name="Kremenetskaia I."/>
            <person name="Kurtz D.B."/>
            <person name="Kwan A."/>
            <person name="Lam B."/>
            <person name="Langin-Hooper S."/>
            <person name="Lee A."/>
            <person name="Lee J.M."/>
            <person name="Lenz C.A."/>
            <person name="Li J.H."/>
            <person name="Li Y.-P."/>
            <person name="Lin X."/>
            <person name="Liu S.X."/>
            <person name="Liu Z.A."/>
            <person name="Luros J.S."/>
            <person name="Maiti R."/>
            <person name="Marziali A."/>
            <person name="Militscher J."/>
            <person name="Miranda M."/>
            <person name="Nguyen M."/>
            <person name="Nierman W.C."/>
            <person name="Osborne B.I."/>
            <person name="Pai G."/>
            <person name="Peterson J."/>
            <person name="Pham P.K."/>
            <person name="Rizzo M."/>
            <person name="Rooney T."/>
            <person name="Rowley D."/>
            <person name="Sakano H."/>
            <person name="Salzberg S.L."/>
            <person name="Schwartz J.R."/>
            <person name="Shinn P."/>
            <person name="Southwick A.M."/>
            <person name="Sun H."/>
            <person name="Tallon L.J."/>
            <person name="Tambunga G."/>
            <person name="Toriumi M.J."/>
            <person name="Town C.D."/>
            <person name="Utterback T."/>
            <person name="Van Aken S."/>
            <person name="Vaysberg M."/>
            <person name="Vysotskaia V.S."/>
            <person name="Walker M."/>
            <person name="Wu D."/>
            <person name="Yu G."/>
            <person name="Fraser C.M."/>
            <person name="Venter J.C."/>
            <person name="Davis R.W."/>
        </authorList>
    </citation>
    <scope>NUCLEOTIDE SEQUENCE [LARGE SCALE GENOMIC DNA]</scope>
    <source>
        <strain>cv. Columbia</strain>
    </source>
</reference>
<reference key="2">
    <citation type="journal article" date="2017" name="Plant J.">
        <title>Araport11: a complete reannotation of the Arabidopsis thaliana reference genome.</title>
        <authorList>
            <person name="Cheng C.Y."/>
            <person name="Krishnakumar V."/>
            <person name="Chan A.P."/>
            <person name="Thibaud-Nissen F."/>
            <person name="Schobel S."/>
            <person name="Town C.D."/>
        </authorList>
    </citation>
    <scope>GENOME REANNOTATION</scope>
    <source>
        <strain>cv. Columbia</strain>
    </source>
</reference>
<reference key="3">
    <citation type="journal article" date="2003" name="Science">
        <title>Empirical analysis of transcriptional activity in the Arabidopsis genome.</title>
        <authorList>
            <person name="Yamada K."/>
            <person name="Lim J."/>
            <person name="Dale J.M."/>
            <person name="Chen H."/>
            <person name="Shinn P."/>
            <person name="Palm C.J."/>
            <person name="Southwick A.M."/>
            <person name="Wu H.C."/>
            <person name="Kim C.J."/>
            <person name="Nguyen M."/>
            <person name="Pham P.K."/>
            <person name="Cheuk R.F."/>
            <person name="Karlin-Newmann G."/>
            <person name="Liu S.X."/>
            <person name="Lam B."/>
            <person name="Sakano H."/>
            <person name="Wu T."/>
            <person name="Yu G."/>
            <person name="Miranda M."/>
            <person name="Quach H.L."/>
            <person name="Tripp M."/>
            <person name="Chang C.H."/>
            <person name="Lee J.M."/>
            <person name="Toriumi M.J."/>
            <person name="Chan M.M."/>
            <person name="Tang C.C."/>
            <person name="Onodera C.S."/>
            <person name="Deng J.M."/>
            <person name="Akiyama K."/>
            <person name="Ansari Y."/>
            <person name="Arakawa T."/>
            <person name="Banh J."/>
            <person name="Banno F."/>
            <person name="Bowser L."/>
            <person name="Brooks S.Y."/>
            <person name="Carninci P."/>
            <person name="Chao Q."/>
            <person name="Choy N."/>
            <person name="Enju A."/>
            <person name="Goldsmith A.D."/>
            <person name="Gurjal M."/>
            <person name="Hansen N.F."/>
            <person name="Hayashizaki Y."/>
            <person name="Johnson-Hopson C."/>
            <person name="Hsuan V.W."/>
            <person name="Iida K."/>
            <person name="Karnes M."/>
            <person name="Khan S."/>
            <person name="Koesema E."/>
            <person name="Ishida J."/>
            <person name="Jiang P.X."/>
            <person name="Jones T."/>
            <person name="Kawai J."/>
            <person name="Kamiya A."/>
            <person name="Meyers C."/>
            <person name="Nakajima M."/>
            <person name="Narusaka M."/>
            <person name="Seki M."/>
            <person name="Sakurai T."/>
            <person name="Satou M."/>
            <person name="Tamse R."/>
            <person name="Vaysberg M."/>
            <person name="Wallender E.K."/>
            <person name="Wong C."/>
            <person name="Yamamura Y."/>
            <person name="Yuan S."/>
            <person name="Shinozaki K."/>
            <person name="Davis R.W."/>
            <person name="Theologis A."/>
            <person name="Ecker J.R."/>
        </authorList>
    </citation>
    <scope>NUCLEOTIDE SEQUENCE [LARGE SCALE MRNA]</scope>
    <source>
        <strain>cv. Columbia</strain>
    </source>
</reference>
<reference key="4">
    <citation type="journal article" date="2004" name="Prog. Lipid Res.">
        <title>GDSL family of serine esterases/lipases.</title>
        <authorList>
            <person name="Akoh C.C."/>
            <person name="Lee G.-C."/>
            <person name="Liaw Y.-C."/>
            <person name="Huang T.-H."/>
            <person name="Shaw J.-F."/>
        </authorList>
    </citation>
    <scope>REVIEW</scope>
</reference>
<reference key="5">
    <citation type="journal article" date="2008" name="Pak. J. Biol. Sci.">
        <title>Sequence analysis of GDSL lipase gene family in Arabidopsis thaliana.</title>
        <authorList>
            <person name="Ling H."/>
        </authorList>
    </citation>
    <scope>GENE FAMILY</scope>
</reference>
<name>GDL2_ARATH</name>
<accession>O80522</accession>
<comment type="subcellular location">
    <subcellularLocation>
        <location evidence="3">Secreted</location>
    </subcellularLocation>
</comment>
<comment type="similarity">
    <text evidence="3">Belongs to the 'GDSL' lipolytic enzyme family.</text>
</comment>
<evidence type="ECO:0000250" key="1"/>
<evidence type="ECO:0000255" key="2"/>
<evidence type="ECO:0000305" key="3"/>
<feature type="signal peptide" evidence="2">
    <location>
        <begin position="1"/>
        <end position="27"/>
    </location>
</feature>
<feature type="chain" id="PRO_0000367344" description="GDSL esterase/lipase At1g09390">
    <location>
        <begin position="28"/>
        <end position="370"/>
    </location>
</feature>
<feature type="active site" description="Nucleophile" evidence="1">
    <location>
        <position position="44"/>
    </location>
</feature>
<feature type="active site" evidence="1">
    <location>
        <position position="336"/>
    </location>
</feature>
<feature type="active site" evidence="1">
    <location>
        <position position="339"/>
    </location>
</feature>
<feature type="glycosylation site" description="N-linked (GlcNAc...) asparagine" evidence="2">
    <location>
        <position position="90"/>
    </location>
</feature>
<feature type="glycosylation site" description="N-linked (GlcNAc...) asparagine" evidence="2">
    <location>
        <position position="315"/>
    </location>
</feature>
<sequence length="370" mass="40477">MATLSLHSHSFLLVLLPFILILRQNLAVAGGCQVPPVIFNFGDSNSDTGGLVAGLGYSIGLPNGRSFFQRSTGRLSDGRLVIDFLCQSLNTSLLNPYLDSLVGSKFQNGANFAIVGSSTLPRYVPFALNIQLMQFLHFKSRALELASISDPLKEMMIGESGFRNALYMIDIGQNDIADSFSKGLSYSRVVKLIPNVISEIKSAIKILYDEGGRKFWVHNTGPLGCLPQKLSMVHSKGFDKHGCLATYNAAAKLFNEGLDHMCRDLRTELKEANIVYVDIYAIKYDLIANSNNYGFEKPLMACCGYGGPPYNYNVNITCGNGGSKSCDEGSRFISWDGIHYTETANAIVAMKVLSMQHSTPPTPFHFFCGG</sequence>
<proteinExistence type="evidence at transcript level"/>
<dbReference type="EC" id="3.1.1.-"/>
<dbReference type="EMBL" id="AC003970">
    <property type="protein sequence ID" value="AAC33199.1"/>
    <property type="molecule type" value="Genomic_DNA"/>
</dbReference>
<dbReference type="EMBL" id="CP002684">
    <property type="protein sequence ID" value="AEE28436.1"/>
    <property type="molecule type" value="Genomic_DNA"/>
</dbReference>
<dbReference type="EMBL" id="BT002885">
    <property type="protein sequence ID" value="AAO22702.1"/>
    <property type="molecule type" value="mRNA"/>
</dbReference>
<dbReference type="EMBL" id="BT004397">
    <property type="protein sequence ID" value="AAO42391.1"/>
    <property type="molecule type" value="mRNA"/>
</dbReference>
<dbReference type="PIR" id="B86227">
    <property type="entry name" value="B86227"/>
</dbReference>
<dbReference type="RefSeq" id="NP_172410.1">
    <property type="nucleotide sequence ID" value="NM_100809.5"/>
</dbReference>
<dbReference type="SMR" id="O80522"/>
<dbReference type="FunCoup" id="O80522">
    <property type="interactions" value="115"/>
</dbReference>
<dbReference type="STRING" id="3702.O80522"/>
<dbReference type="GlyGen" id="O80522">
    <property type="glycosylation" value="2 sites"/>
</dbReference>
<dbReference type="PaxDb" id="3702-AT1G09390.1"/>
<dbReference type="ProteomicsDB" id="221971"/>
<dbReference type="EnsemblPlants" id="AT1G09390.1">
    <property type="protein sequence ID" value="AT1G09390.1"/>
    <property type="gene ID" value="AT1G09390"/>
</dbReference>
<dbReference type="GeneID" id="837461"/>
<dbReference type="Gramene" id="AT1G09390.1">
    <property type="protein sequence ID" value="AT1G09390.1"/>
    <property type="gene ID" value="AT1G09390"/>
</dbReference>
<dbReference type="KEGG" id="ath:AT1G09390"/>
<dbReference type="Araport" id="AT1G09390"/>
<dbReference type="TAIR" id="AT1G09390"/>
<dbReference type="eggNOG" id="ENOG502QTD0">
    <property type="taxonomic scope" value="Eukaryota"/>
</dbReference>
<dbReference type="HOGENOM" id="CLU_015101_2_0_1"/>
<dbReference type="InParanoid" id="O80522"/>
<dbReference type="OMA" id="RHLCNGM"/>
<dbReference type="PhylomeDB" id="O80522"/>
<dbReference type="BioCyc" id="ARA:AT1G09390-MONOMER"/>
<dbReference type="PRO" id="PR:O80522"/>
<dbReference type="Proteomes" id="UP000006548">
    <property type="component" value="Chromosome 1"/>
</dbReference>
<dbReference type="ExpressionAtlas" id="O80522">
    <property type="expression patterns" value="baseline and differential"/>
</dbReference>
<dbReference type="GO" id="GO:0009570">
    <property type="term" value="C:chloroplast stroma"/>
    <property type="evidence" value="ECO:0007005"/>
    <property type="project" value="TAIR"/>
</dbReference>
<dbReference type="GO" id="GO:0005576">
    <property type="term" value="C:extracellular region"/>
    <property type="evidence" value="ECO:0007669"/>
    <property type="project" value="UniProtKB-SubCell"/>
</dbReference>
<dbReference type="GO" id="GO:0016788">
    <property type="term" value="F:hydrolase activity, acting on ester bonds"/>
    <property type="evidence" value="ECO:0007669"/>
    <property type="project" value="InterPro"/>
</dbReference>
<dbReference type="GO" id="GO:0016042">
    <property type="term" value="P:lipid catabolic process"/>
    <property type="evidence" value="ECO:0007669"/>
    <property type="project" value="UniProtKB-KW"/>
</dbReference>
<dbReference type="CDD" id="cd01837">
    <property type="entry name" value="SGNH_plant_lipase_like"/>
    <property type="match status" value="1"/>
</dbReference>
<dbReference type="FunFam" id="3.40.50.1110:FF:000009">
    <property type="entry name" value="GDSL esterase/lipase At1g09390"/>
    <property type="match status" value="1"/>
</dbReference>
<dbReference type="Gene3D" id="3.40.50.1110">
    <property type="entry name" value="SGNH hydrolase"/>
    <property type="match status" value="1"/>
</dbReference>
<dbReference type="InterPro" id="IPR001087">
    <property type="entry name" value="GDSL"/>
</dbReference>
<dbReference type="InterPro" id="IPR036514">
    <property type="entry name" value="SGNH_hydro_sf"/>
</dbReference>
<dbReference type="InterPro" id="IPR035669">
    <property type="entry name" value="SGNH_plant_lipase-like"/>
</dbReference>
<dbReference type="PANTHER" id="PTHR22835:SF275">
    <property type="entry name" value="OS01G0331100 PROTEIN"/>
    <property type="match status" value="1"/>
</dbReference>
<dbReference type="PANTHER" id="PTHR22835">
    <property type="entry name" value="ZINC FINGER FYVE DOMAIN CONTAINING PROTEIN"/>
    <property type="match status" value="1"/>
</dbReference>
<dbReference type="Pfam" id="PF00657">
    <property type="entry name" value="Lipase_GDSL"/>
    <property type="match status" value="1"/>
</dbReference>
<dbReference type="SUPFAM" id="SSF52266">
    <property type="entry name" value="SGNH hydrolase"/>
    <property type="match status" value="1"/>
</dbReference>
<keyword id="KW-0325">Glycoprotein</keyword>
<keyword id="KW-0378">Hydrolase</keyword>
<keyword id="KW-0442">Lipid degradation</keyword>
<keyword id="KW-0443">Lipid metabolism</keyword>
<keyword id="KW-1185">Reference proteome</keyword>
<keyword id="KW-0964">Secreted</keyword>
<keyword id="KW-0732">Signal</keyword>
<gene>
    <name type="ordered locus">At1g09390</name>
    <name type="ORF">F14J9.5</name>
</gene>